<keyword id="KW-0238">DNA-binding</keyword>
<keyword id="KW-0479">Metal-binding</keyword>
<keyword id="KW-0539">Nucleus</keyword>
<keyword id="KW-1185">Reference proteome</keyword>
<keyword id="KW-0677">Repeat</keyword>
<keyword id="KW-0804">Transcription</keyword>
<keyword id="KW-0805">Transcription regulation</keyword>
<keyword id="KW-0862">Zinc</keyword>
<keyword id="KW-0863">Zinc-finger</keyword>
<evidence type="ECO:0000255" key="1">
    <source>
        <dbReference type="PROSITE-ProRule" id="PRU00042"/>
    </source>
</evidence>
<evidence type="ECO:0000305" key="2"/>
<comment type="function">
    <text>May be involved in transcriptional regulation.</text>
</comment>
<comment type="subcellular location">
    <subcellularLocation>
        <location evidence="2">Nucleus</location>
    </subcellularLocation>
</comment>
<comment type="similarity">
    <text evidence="2">Belongs to the krueppel C2H2-type zinc-finger protein family.</text>
</comment>
<sequence>MFTAPGVAATRERPYSCSVCGKSFQYSAVLLRHERAHGGDKRFRCLECGERCARASDLRVHRWTHAGQTLYICSECGQSFSHSSLLDLHLGTHRRRSSTCPCRLCGRRFPHVSALLLHRVRQHPPEKPHRCPLCARSFRQSALPFHLARAHPPETTIATAPAPSTLYHCTQCPRAFHSSAGLRNHSRIHVVPSLSDPGAEAHRCGVCGKSFSKSSTLTRHLQRHSGEKPFKCPECGKGFLESATLVRHQRTHTGEKPYACNDCGRCFSESSTLLRHQRSHQGERPHICATCGKGFGQRYDLVVHQRSHTGERPFPCPECGRGFTDRSDLTKHLRTHTGEKPYHCELCGKRFTCISNLNVHLRNHAGHKPHKCPECGKSFSVASKLALHRKTHLGERTAECTECGKFFSHGRSLSQHQRSHRRARAAAMAATTTTTVVTEMTIGPSLTLTGPTEQEKSGLLVSTFQETC</sequence>
<protein>
    <recommendedName>
        <fullName>Zinc finger protein 672</fullName>
    </recommendedName>
</protein>
<feature type="chain" id="PRO_0000233993" description="Zinc finger protein 672">
    <location>
        <begin position="1"/>
        <end position="468"/>
    </location>
</feature>
<feature type="zinc finger region" description="C2H2-type 1" evidence="1">
    <location>
        <begin position="15"/>
        <end position="37"/>
    </location>
</feature>
<feature type="zinc finger region" description="C2H2-type 2" evidence="1">
    <location>
        <begin position="43"/>
        <end position="65"/>
    </location>
</feature>
<feature type="zinc finger region" description="C2H2-type 3" evidence="1">
    <location>
        <begin position="71"/>
        <end position="93"/>
    </location>
</feature>
<feature type="zinc finger region" description="C2H2-type 4" evidence="1">
    <location>
        <begin position="100"/>
        <end position="123"/>
    </location>
</feature>
<feature type="zinc finger region" description="C2H2-type 5; degenerate" evidence="1">
    <location>
        <begin position="129"/>
        <end position="151"/>
    </location>
</feature>
<feature type="zinc finger region" description="C2H2-type 6" evidence="1">
    <location>
        <begin position="167"/>
        <end position="189"/>
    </location>
</feature>
<feature type="zinc finger region" description="C2H2-type 7" evidence="1">
    <location>
        <begin position="202"/>
        <end position="224"/>
    </location>
</feature>
<feature type="zinc finger region" description="C2H2-type 8" evidence="1">
    <location>
        <begin position="230"/>
        <end position="252"/>
    </location>
</feature>
<feature type="zinc finger region" description="C2H2-type 9" evidence="1">
    <location>
        <begin position="258"/>
        <end position="280"/>
    </location>
</feature>
<feature type="zinc finger region" description="C2H2-type 10" evidence="1">
    <location>
        <begin position="286"/>
        <end position="308"/>
    </location>
</feature>
<feature type="zinc finger region" description="C2H2-type 11" evidence="1">
    <location>
        <begin position="314"/>
        <end position="336"/>
    </location>
</feature>
<feature type="zinc finger region" description="C2H2-type 12" evidence="1">
    <location>
        <begin position="342"/>
        <end position="364"/>
    </location>
</feature>
<feature type="zinc finger region" description="C2H2-type 13" evidence="1">
    <location>
        <begin position="370"/>
        <end position="392"/>
    </location>
</feature>
<feature type="zinc finger region" description="C2H2-type 14" evidence="1">
    <location>
        <begin position="398"/>
        <end position="420"/>
    </location>
</feature>
<reference key="1">
    <citation type="journal article" date="2004" name="Genome Res.">
        <title>The status, quality, and expansion of the NIH full-length cDNA project: the Mammalian Gene Collection (MGC).</title>
        <authorList>
            <consortium name="The MGC Project Team"/>
        </authorList>
    </citation>
    <scope>NUCLEOTIDE SEQUENCE [LARGE SCALE MRNA]</scope>
    <source>
        <tissue>Testis</tissue>
    </source>
</reference>
<accession>Q642B2</accession>
<name>ZN672_RAT</name>
<gene>
    <name type="primary">Znf672</name>
    <name type="synonym">Zfp672</name>
</gene>
<dbReference type="EMBL" id="BC081919">
    <property type="protein sequence ID" value="AAH81919.1"/>
    <property type="molecule type" value="mRNA"/>
</dbReference>
<dbReference type="RefSeq" id="NP_001007670.1">
    <property type="nucleotide sequence ID" value="NM_001007669.1"/>
</dbReference>
<dbReference type="RefSeq" id="XP_006246451.1">
    <property type="nucleotide sequence ID" value="XM_006246389.3"/>
</dbReference>
<dbReference type="RefSeq" id="XP_006246452.1">
    <property type="nucleotide sequence ID" value="XM_006246390.2"/>
</dbReference>
<dbReference type="RefSeq" id="XP_006246453.1">
    <property type="nucleotide sequence ID" value="XM_006246391.3"/>
</dbReference>
<dbReference type="RefSeq" id="XP_008765908.1">
    <property type="nucleotide sequence ID" value="XM_008767686.2"/>
</dbReference>
<dbReference type="RefSeq" id="XP_008765909.1">
    <property type="nucleotide sequence ID" value="XM_008767687.1"/>
</dbReference>
<dbReference type="RefSeq" id="XP_017452753.1">
    <property type="nucleotide sequence ID" value="XM_017597264.1"/>
</dbReference>
<dbReference type="SMR" id="Q642B2"/>
<dbReference type="STRING" id="10116.ENSRNOP00000003639"/>
<dbReference type="PhosphoSitePlus" id="Q642B2"/>
<dbReference type="PaxDb" id="10116-ENSRNOP00000003639"/>
<dbReference type="Ensembl" id="ENSRNOT00000003639.5">
    <property type="protein sequence ID" value="ENSRNOP00000003639.4"/>
    <property type="gene ID" value="ENSRNOG00000002713.5"/>
</dbReference>
<dbReference type="Ensembl" id="ENSRNOT00000101790.1">
    <property type="protein sequence ID" value="ENSRNOP00000090914.1"/>
    <property type="gene ID" value="ENSRNOG00000002713.5"/>
</dbReference>
<dbReference type="Ensembl" id="ENSRNOT00000105694.1">
    <property type="protein sequence ID" value="ENSRNOP00000094118.1"/>
    <property type="gene ID" value="ENSRNOG00000002713.5"/>
</dbReference>
<dbReference type="Ensembl" id="ENSRNOT00000115234.1">
    <property type="protein sequence ID" value="ENSRNOP00000097601.1"/>
    <property type="gene ID" value="ENSRNOG00000002713.5"/>
</dbReference>
<dbReference type="GeneID" id="303165"/>
<dbReference type="KEGG" id="rno:303165"/>
<dbReference type="UCSC" id="RGD:1359094">
    <property type="organism name" value="rat"/>
</dbReference>
<dbReference type="AGR" id="RGD:1359094"/>
<dbReference type="CTD" id="319475"/>
<dbReference type="RGD" id="1359094">
    <property type="gene designation" value="Zfp672"/>
</dbReference>
<dbReference type="eggNOG" id="KOG1721">
    <property type="taxonomic scope" value="Eukaryota"/>
</dbReference>
<dbReference type="GeneTree" id="ENSGT01130000278280"/>
<dbReference type="HOGENOM" id="CLU_002678_44_0_1"/>
<dbReference type="InParanoid" id="Q642B2"/>
<dbReference type="OMA" id="CPCRTCG"/>
<dbReference type="OrthoDB" id="1095242at2759"/>
<dbReference type="PhylomeDB" id="Q642B2"/>
<dbReference type="TreeFam" id="TF337999"/>
<dbReference type="PRO" id="PR:Q642B2"/>
<dbReference type="Proteomes" id="UP000002494">
    <property type="component" value="Chromosome 10"/>
</dbReference>
<dbReference type="Bgee" id="ENSRNOG00000002713">
    <property type="expression patterns" value="Expressed in testis and 20 other cell types or tissues"/>
</dbReference>
<dbReference type="GO" id="GO:0005634">
    <property type="term" value="C:nucleus"/>
    <property type="evidence" value="ECO:0000318"/>
    <property type="project" value="GO_Central"/>
</dbReference>
<dbReference type="GO" id="GO:0003677">
    <property type="term" value="F:DNA binding"/>
    <property type="evidence" value="ECO:0007669"/>
    <property type="project" value="UniProtKB-KW"/>
</dbReference>
<dbReference type="GO" id="GO:0008270">
    <property type="term" value="F:zinc ion binding"/>
    <property type="evidence" value="ECO:0007669"/>
    <property type="project" value="UniProtKB-KW"/>
</dbReference>
<dbReference type="GO" id="GO:0006357">
    <property type="term" value="P:regulation of transcription by RNA polymerase II"/>
    <property type="evidence" value="ECO:0000318"/>
    <property type="project" value="GO_Central"/>
</dbReference>
<dbReference type="FunFam" id="3.30.160.60:FF:000823">
    <property type="entry name" value="replication initiator 1 isoform X1"/>
    <property type="match status" value="1"/>
</dbReference>
<dbReference type="FunFam" id="3.30.160.60:FF:000100">
    <property type="entry name" value="Zinc finger 45-like"/>
    <property type="match status" value="1"/>
</dbReference>
<dbReference type="FunFam" id="3.30.160.60:FF:000446">
    <property type="entry name" value="Zinc finger protein"/>
    <property type="match status" value="2"/>
</dbReference>
<dbReference type="FunFam" id="3.30.160.60:FF:002343">
    <property type="entry name" value="Zinc finger protein 33A"/>
    <property type="match status" value="2"/>
</dbReference>
<dbReference type="FunFam" id="3.30.160.60:FF:000848">
    <property type="entry name" value="Zinc finger protein 35"/>
    <property type="match status" value="1"/>
</dbReference>
<dbReference type="FunFam" id="3.30.160.60:FF:000399">
    <property type="entry name" value="zinc finger protein 521"/>
    <property type="match status" value="1"/>
</dbReference>
<dbReference type="FunFam" id="3.30.160.60:FF:001468">
    <property type="entry name" value="Zinc finger protein 672"/>
    <property type="match status" value="1"/>
</dbReference>
<dbReference type="FunFam" id="3.30.160.60:FF:002331">
    <property type="entry name" value="Zinc finger protein 672"/>
    <property type="match status" value="1"/>
</dbReference>
<dbReference type="FunFam" id="3.30.160.60:FF:003130">
    <property type="entry name" value="Zinc finger protein 672"/>
    <property type="match status" value="1"/>
</dbReference>
<dbReference type="Gene3D" id="3.30.160.60">
    <property type="entry name" value="Classic Zinc Finger"/>
    <property type="match status" value="12"/>
</dbReference>
<dbReference type="InterPro" id="IPR036236">
    <property type="entry name" value="Znf_C2H2_sf"/>
</dbReference>
<dbReference type="InterPro" id="IPR013087">
    <property type="entry name" value="Znf_C2H2_type"/>
</dbReference>
<dbReference type="PANTHER" id="PTHR14003">
    <property type="entry name" value="TRANSCRIPTIONAL REPRESSOR PROTEIN YY"/>
    <property type="match status" value="1"/>
</dbReference>
<dbReference type="PANTHER" id="PTHR14003:SF23">
    <property type="entry name" value="ZINC FINGER PROTEIN 143"/>
    <property type="match status" value="1"/>
</dbReference>
<dbReference type="Pfam" id="PF00096">
    <property type="entry name" value="zf-C2H2"/>
    <property type="match status" value="9"/>
</dbReference>
<dbReference type="Pfam" id="PF13894">
    <property type="entry name" value="zf-C2H2_4"/>
    <property type="match status" value="1"/>
</dbReference>
<dbReference type="SMART" id="SM00355">
    <property type="entry name" value="ZnF_C2H2"/>
    <property type="match status" value="14"/>
</dbReference>
<dbReference type="SUPFAM" id="SSF57667">
    <property type="entry name" value="beta-beta-alpha zinc fingers"/>
    <property type="match status" value="8"/>
</dbReference>
<dbReference type="PROSITE" id="PS00028">
    <property type="entry name" value="ZINC_FINGER_C2H2_1"/>
    <property type="match status" value="13"/>
</dbReference>
<dbReference type="PROSITE" id="PS50157">
    <property type="entry name" value="ZINC_FINGER_C2H2_2"/>
    <property type="match status" value="13"/>
</dbReference>
<proteinExistence type="evidence at transcript level"/>
<organism>
    <name type="scientific">Rattus norvegicus</name>
    <name type="common">Rat</name>
    <dbReference type="NCBI Taxonomy" id="10116"/>
    <lineage>
        <taxon>Eukaryota</taxon>
        <taxon>Metazoa</taxon>
        <taxon>Chordata</taxon>
        <taxon>Craniata</taxon>
        <taxon>Vertebrata</taxon>
        <taxon>Euteleostomi</taxon>
        <taxon>Mammalia</taxon>
        <taxon>Eutheria</taxon>
        <taxon>Euarchontoglires</taxon>
        <taxon>Glires</taxon>
        <taxon>Rodentia</taxon>
        <taxon>Myomorpha</taxon>
        <taxon>Muroidea</taxon>
        <taxon>Muridae</taxon>
        <taxon>Murinae</taxon>
        <taxon>Rattus</taxon>
    </lineage>
</organism>